<evidence type="ECO:0000255" key="1"/>
<evidence type="ECO:0000256" key="2">
    <source>
        <dbReference type="SAM" id="MobiDB-lite"/>
    </source>
</evidence>
<evidence type="ECO:0000269" key="3">
    <source>
    </source>
</evidence>
<evidence type="ECO:0000269" key="4">
    <source>
    </source>
</evidence>
<evidence type="ECO:0000305" key="5"/>
<evidence type="ECO:0000312" key="6">
    <source>
        <dbReference type="Proteomes" id="UP000001940"/>
    </source>
</evidence>
<evidence type="ECO:0000312" key="7">
    <source>
        <dbReference type="WormBase" id="T09E8.1a"/>
    </source>
</evidence>
<evidence type="ECO:0000312" key="8">
    <source>
        <dbReference type="WormBase" id="T09E8.1b"/>
    </source>
</evidence>
<evidence type="ECO:0000312" key="9">
    <source>
        <dbReference type="WormBase" id="T09E8.1c"/>
    </source>
</evidence>
<evidence type="ECO:0000312" key="10">
    <source>
        <dbReference type="WormBase" id="T09E8.1d"/>
    </source>
</evidence>
<evidence type="ECO:0000312" key="11">
    <source>
        <dbReference type="WormBase" id="T09E8.1e"/>
    </source>
</evidence>
<evidence type="ECO:0000312" key="12">
    <source>
        <dbReference type="WormBase" id="T09E8.1f"/>
    </source>
</evidence>
<evidence type="ECO:0000312" key="13">
    <source>
        <dbReference type="WormBase" id="T09E8.1g"/>
    </source>
</evidence>
<evidence type="ECO:0000312" key="14">
    <source>
        <dbReference type="WormBase" id="T09E8.1h"/>
    </source>
</evidence>
<evidence type="ECO:0000312" key="15">
    <source>
        <dbReference type="WormBase" id="T09E8.1i"/>
    </source>
</evidence>
<name>NOCA1_CAEEL</name>
<comment type="function">
    <text evidence="3 4">Plays a role in the assembly of microtubule arrays in the germline acting redundantly with ptrn-1 to control circumferential microtubule assembly along the body which is necessary for larval development, viability, and morphology and integrity of the epidermis (PubMed:26371552). Required for microtubule stability and anchorage by binding to microtubule minus ends (PubMed:26371552). Recruited to hemidesomosomes in early embryonic elongation to direct the nucleation and growth of non-centrosomal microtubules (PubMed:26586219).</text>
</comment>
<comment type="function">
    <molecule>Isoform b</molecule>
    <text evidence="3">Required for normal nuclear migration in the embryonic epidermis.</text>
</comment>
<comment type="function">
    <molecule>Isoform h</molecule>
    <text evidence="3">Directs the assembly of non-centrosomal microtubule arrays that determine the position of nuclei within intracellular compartments in the epidermis and this is independent of ptrn-1 activity.</text>
</comment>
<comment type="subcellular location">
    <subcellularLocation>
        <location evidence="3">Cytoplasm</location>
        <location evidence="3">Cytoskeleton</location>
    </subcellularLocation>
    <subcellularLocation>
        <location evidence="3">Apical cell membrane</location>
    </subcellularLocation>
    <subcellularLocation>
        <location evidence="4">Cell junction</location>
        <location evidence="4">Hemidesmosome</location>
    </subcellularLocation>
    <subcellularLocation>
        <location evidence="4">Cell junction</location>
        <location evidence="4">Adherens junction</location>
    </subcellularLocation>
    <text evidence="3">Isoform h: Co-localizes with gamma-tubulin to the apical cell membrane.</text>
</comment>
<comment type="alternative products">
    <event type="alternative splicing"/>
    <isoform>
        <id>G5EEK3-1</id>
        <name evidence="9">c</name>
        <sequence type="displayed"/>
    </isoform>
    <isoform>
        <id>G5EEK3-2</id>
        <name evidence="7">a</name>
        <sequence type="described" ref="VSP_058278"/>
    </isoform>
    <isoform>
        <id>G5EEK3-3</id>
        <name evidence="8">b</name>
        <sequence type="described" ref="VSP_058279"/>
    </isoform>
    <isoform>
        <id>G5EEK3-4</id>
        <name evidence="10">d</name>
        <sequence type="described" ref="VSP_058274"/>
    </isoform>
    <isoform>
        <id>G5EEK3-5</id>
        <name evidence="11">e</name>
        <sequence type="described" ref="VSP_058275"/>
    </isoform>
    <isoform>
        <id>G5EEK3-6</id>
        <name evidence="12">f</name>
        <sequence type="described" ref="VSP_058280"/>
    </isoform>
    <isoform>
        <id>G5EEK3-7</id>
        <name evidence="13">g</name>
        <sequence type="described" ref="VSP_058276"/>
    </isoform>
    <isoform>
        <id>G5EEK3-8</id>
        <name evidence="14">h</name>
        <sequence type="described" ref="VSP_058281"/>
    </isoform>
    <isoform>
        <id>G5EEK3-9</id>
        <name evidence="15">i</name>
        <sequence type="described" ref="VSP_058277 VSP_058282"/>
    </isoform>
</comment>
<comment type="developmental stage">
    <text evidence="3 4">First expressed in between seam cells at the lima-bean stage of embryogenesis (PubMed:26586219). Expressed in the embryonic epidermis and in puncta in the epidermal syncytium and also in between the epidermal body syncytium and the seam cells of larvae (PubMed:26371552).</text>
</comment>
<comment type="disruption phenotype">
    <molecule>Isoform b</molecule>
    <text evidence="3 4">Deletion results in slower embryonic development, mutants that are 5% shorter than their wild-type conterparts, and also leads to the prevention of nuclear migration in the embryonic epidermis (PubMed:26371552, PubMed:26586219). RNAi-mediated knockdown results in fragmentation of the cadherin-based junctional complex in embryos and intermediate filaments display a diffuse pattern in older embryos (PubMed:26586219). RNAi-mediated knockdown of isoform h results in disrupted germline architecture and sterility (PubMed:26371552).</text>
</comment>
<sequence>MSNERVSTGSLGERLMLRTRSTRGSVRETLSKAIRSTLGRASSMERKDMPDRPKYGTALTAMTSTTPPSPKDRSSDSGDGDSPRPRKFSSKECARIYFSNTSSEHSSRSNSSTPRRVRHTTASSGYGSLSHLPPISYRKSSDPLNSLMSQSMYVQSPGMHIDEPKCTSLSQRRLYYEDSSETYIPSSPSLTTLKDFMMTNDDETFDDFDFDNDDVKSVISSASTSRIFSVDNRMSKYQKNQSLRQFLNSPVRLRKRGDTSRRDAVEAGFEPRDTVPRCHSTQSLRDVQRVRSYNNSQFQASDLSLNPNGSIRAACDSTSGSVAPTAVVNPARNHVISHRQQHHTSYEKDLIPHHNIDVDRRRSLQALNGSSALYQLNNGGSPNGVRSQFSPSDLSIHTPVHHVGSRVRVSSVNQICDSNSAPQFSIDQRRSVHNIGNPVRNSFVDGIKTTSTPKNQIAVAPLAHKSRHLSESRDEMRGGAERRGSGGQMNLPAYTNYLIRHSGEERLVDGPVTNASDARIAYLEKRIRELELTQKEQSSHSTPSQSRHSSSKSSHFNGSSNLSTSEQLRLQEMSDELANKDRKVTSLESKLLKAYQRIERLNEEYDGKIKNLMYDSERARDDLTRCVDKIQQLENELDETRAAVQNGDHANEQEYHELRDKIWKQERELQESRTLLTRLREKEAEFERMRSEKGYLELKNENLNKKLEAKKRAVEELERSVSTLRLEQTICQQSCSSGSTPLADEMEIMSDIRPSLARPYTKAHSTLGSHNMSPLSHSKSSGLTKSFSNFALNSSKQRDDITANMSRSIREQNRHITMCRAMVVCLKDTVDRMARGENPDVARLLGVKLNVMSESEMEDDEDHEADASQPFSMMSAESALSKQCGKLADLDKDLDTIRCQLADWHGQTNAEGDGDRDVCRVQ</sequence>
<proteinExistence type="evidence at transcript level"/>
<dbReference type="EMBL" id="KT722731">
    <property type="protein sequence ID" value="ALF12299.1"/>
    <property type="molecule type" value="mRNA"/>
</dbReference>
<dbReference type="EMBL" id="BX284605">
    <property type="protein sequence ID" value="CAB03162.1"/>
    <property type="molecule type" value="Genomic_DNA"/>
</dbReference>
<dbReference type="EMBL" id="BX284605">
    <property type="protein sequence ID" value="CAB54298.2"/>
    <property type="molecule type" value="Genomic_DNA"/>
</dbReference>
<dbReference type="EMBL" id="BX284605">
    <property type="protein sequence ID" value="CAB54297.2"/>
    <property type="molecule type" value="Genomic_DNA"/>
</dbReference>
<dbReference type="EMBL" id="BX284605">
    <property type="protein sequence ID" value="CAD54154.1"/>
    <property type="molecule type" value="Genomic_DNA"/>
</dbReference>
<dbReference type="EMBL" id="BX284605">
    <property type="protein sequence ID" value="CAD54155.2"/>
    <property type="molecule type" value="Genomic_DNA"/>
</dbReference>
<dbReference type="EMBL" id="BX284605">
    <property type="protein sequence ID" value="CAD54156.2"/>
    <property type="molecule type" value="Genomic_DNA"/>
</dbReference>
<dbReference type="EMBL" id="BX284605">
    <property type="protein sequence ID" value="CAJ80826.1"/>
    <property type="molecule type" value="Genomic_DNA"/>
</dbReference>
<dbReference type="EMBL" id="BX284605">
    <property type="protein sequence ID" value="CCW45976.1"/>
    <property type="molecule type" value="Genomic_DNA"/>
</dbReference>
<dbReference type="EMBL" id="BX284605">
    <property type="protein sequence ID" value="CUR30005.1"/>
    <property type="molecule type" value="Genomic_DNA"/>
</dbReference>
<dbReference type="PIR" id="T23293">
    <property type="entry name" value="T23293"/>
</dbReference>
<dbReference type="PIR" id="T23295">
    <property type="entry name" value="T23295"/>
</dbReference>
<dbReference type="PIR" id="T23296">
    <property type="entry name" value="T23296"/>
</dbReference>
<dbReference type="RefSeq" id="NP_001041165.1">
    <molecule id="G5EEK3-6"/>
    <property type="nucleotide sequence ID" value="NM_001047700.5"/>
</dbReference>
<dbReference type="RefSeq" id="NP_001294691.1">
    <property type="nucleotide sequence ID" value="NM_001307762.1"/>
</dbReference>
<dbReference type="RefSeq" id="NP_001303706.1">
    <molecule id="G5EEK3-8"/>
    <property type="nucleotide sequence ID" value="NM_001316777.4"/>
</dbReference>
<dbReference type="RefSeq" id="NP_001370898.1">
    <molecule id="G5EEK3-7"/>
    <property type="nucleotide sequence ID" value="NM_001383436.1"/>
</dbReference>
<dbReference type="RefSeq" id="NP_506274.1">
    <molecule id="G5EEK3-9"/>
    <property type="nucleotide sequence ID" value="NM_073873.3"/>
</dbReference>
<dbReference type="RefSeq" id="NP_506275.2">
    <molecule id="G5EEK3-3"/>
    <property type="nucleotide sequence ID" value="NM_073874.4"/>
</dbReference>
<dbReference type="RefSeq" id="NP_506276.2">
    <molecule id="G5EEK3-2"/>
    <property type="nucleotide sequence ID" value="NM_073875.4"/>
</dbReference>
<dbReference type="RefSeq" id="NP_872199.2">
    <molecule id="G5EEK3-1"/>
    <property type="nucleotide sequence ID" value="NM_182399.8"/>
</dbReference>
<dbReference type="RefSeq" id="NP_872200.1">
    <molecule id="G5EEK3-4"/>
    <property type="nucleotide sequence ID" value="NM_182400.7"/>
</dbReference>
<dbReference type="RefSeq" id="NP_872201.2">
    <molecule id="G5EEK3-5"/>
    <property type="nucleotide sequence ID" value="NM_182401.5"/>
</dbReference>
<dbReference type="SMR" id="G5EEK3"/>
<dbReference type="FunCoup" id="G5EEK3">
    <property type="interactions" value="6"/>
</dbReference>
<dbReference type="IntAct" id="G5EEK3">
    <property type="interactions" value="3"/>
</dbReference>
<dbReference type="STRING" id="6239.T09E8.1h.1"/>
<dbReference type="PaxDb" id="6239-T09E8.1c"/>
<dbReference type="PeptideAtlas" id="G5EEK3"/>
<dbReference type="EnsemblMetazoa" id="T09E8.1a.1">
    <molecule id="G5EEK3-2"/>
    <property type="protein sequence ID" value="T09E8.1a.1"/>
    <property type="gene ID" value="WBGene00011647"/>
</dbReference>
<dbReference type="EnsemblMetazoa" id="T09E8.1b.1">
    <molecule id="G5EEK3-3"/>
    <property type="protein sequence ID" value="T09E8.1b.1"/>
    <property type="gene ID" value="WBGene00011647"/>
</dbReference>
<dbReference type="EnsemblMetazoa" id="T09E8.1c.1">
    <molecule id="G5EEK3-1"/>
    <property type="protein sequence ID" value="T09E8.1c.1"/>
    <property type="gene ID" value="WBGene00011647"/>
</dbReference>
<dbReference type="EnsemblMetazoa" id="T09E8.1d.1">
    <molecule id="G5EEK3-4"/>
    <property type="protein sequence ID" value="T09E8.1d.1"/>
    <property type="gene ID" value="WBGene00011647"/>
</dbReference>
<dbReference type="EnsemblMetazoa" id="T09E8.1e.1">
    <molecule id="G5EEK3-5"/>
    <property type="protein sequence ID" value="T09E8.1e.1"/>
    <property type="gene ID" value="WBGene00011647"/>
</dbReference>
<dbReference type="EnsemblMetazoa" id="T09E8.1f.1">
    <molecule id="G5EEK3-6"/>
    <property type="protein sequence ID" value="T09E8.1f.1"/>
    <property type="gene ID" value="WBGene00011647"/>
</dbReference>
<dbReference type="EnsemblMetazoa" id="T09E8.1g.1">
    <molecule id="G5EEK3-7"/>
    <property type="protein sequence ID" value="T09E8.1g.1"/>
    <property type="gene ID" value="WBGene00011647"/>
</dbReference>
<dbReference type="EnsemblMetazoa" id="T09E8.1h.1">
    <molecule id="G5EEK3-8"/>
    <property type="protein sequence ID" value="T09E8.1h.1"/>
    <property type="gene ID" value="WBGene00011647"/>
</dbReference>
<dbReference type="EnsemblMetazoa" id="T09E8.1i.1">
    <molecule id="G5EEK3-9"/>
    <property type="protein sequence ID" value="T09E8.1i.1"/>
    <property type="gene ID" value="WBGene00011647"/>
</dbReference>
<dbReference type="GeneID" id="3565610"/>
<dbReference type="KEGG" id="cel:CELE_T09E8.1"/>
<dbReference type="UCSC" id="K03H4.2">
    <property type="organism name" value="c. elegans"/>
</dbReference>
<dbReference type="UCSC" id="T09E8.1c">
    <property type="organism name" value="c. elegans"/>
</dbReference>
<dbReference type="AGR" id="WB:WBGene00011647"/>
<dbReference type="CTD" id="3565610"/>
<dbReference type="WormBase" id="T09E8.1a">
    <molecule id="G5EEK3-2"/>
    <property type="protein sequence ID" value="CE31987"/>
    <property type="gene ID" value="WBGene00011647"/>
    <property type="gene designation" value="noca-1"/>
</dbReference>
<dbReference type="WormBase" id="T09E8.1b">
    <molecule id="G5EEK3-3"/>
    <property type="protein sequence ID" value="CE31988"/>
    <property type="gene ID" value="WBGene00011647"/>
    <property type="gene designation" value="noca-1"/>
</dbReference>
<dbReference type="WormBase" id="T09E8.1c">
    <molecule id="G5EEK3-1"/>
    <property type="protein sequence ID" value="CE41451"/>
    <property type="gene ID" value="WBGene00011647"/>
    <property type="gene designation" value="noca-1"/>
</dbReference>
<dbReference type="WormBase" id="T09E8.1d">
    <molecule id="G5EEK3-4"/>
    <property type="protein sequence ID" value="CE31990"/>
    <property type="gene ID" value="WBGene00011647"/>
    <property type="gene designation" value="noca-1"/>
</dbReference>
<dbReference type="WormBase" id="T09E8.1e">
    <molecule id="G5EEK3-5"/>
    <property type="protein sequence ID" value="CE47381"/>
    <property type="gene ID" value="WBGene00011647"/>
    <property type="gene designation" value="noca-1"/>
</dbReference>
<dbReference type="WormBase" id="T09E8.1f">
    <molecule id="G5EEK3-6"/>
    <property type="protein sequence ID" value="CE39958"/>
    <property type="gene ID" value="WBGene00011647"/>
    <property type="gene designation" value="noca-1"/>
</dbReference>
<dbReference type="WormBase" id="T09E8.1g">
    <molecule id="G5EEK3-7"/>
    <property type="protein sequence ID" value="CE48378"/>
    <property type="gene ID" value="WBGene00011647"/>
    <property type="gene designation" value="noca-1"/>
</dbReference>
<dbReference type="WormBase" id="T09E8.1h">
    <molecule id="G5EEK3-8"/>
    <property type="protein sequence ID" value="CE51088"/>
    <property type="gene ID" value="WBGene00011647"/>
    <property type="gene designation" value="noca-1"/>
</dbReference>
<dbReference type="WormBase" id="T09E8.1i">
    <molecule id="G5EEK3-9"/>
    <property type="protein sequence ID" value="CE11698"/>
    <property type="gene ID" value="WBGene00011647"/>
    <property type="gene designation" value="noca-1"/>
</dbReference>
<dbReference type="eggNOG" id="ENOG502SSZU">
    <property type="taxonomic scope" value="Eukaryota"/>
</dbReference>
<dbReference type="InParanoid" id="G5EEK3"/>
<dbReference type="OMA" id="PIDFGTR"/>
<dbReference type="OrthoDB" id="5835862at2759"/>
<dbReference type="PRO" id="PR:G5EEK3"/>
<dbReference type="Proteomes" id="UP000001940">
    <property type="component" value="Chromosome V"/>
</dbReference>
<dbReference type="Bgee" id="WBGene00011647">
    <property type="expression patterns" value="Expressed in pharyngeal muscle cell (C elegans) and 4 other cell types or tissues"/>
</dbReference>
<dbReference type="GO" id="GO:0005912">
    <property type="term" value="C:adherens junction"/>
    <property type="evidence" value="ECO:0007669"/>
    <property type="project" value="UniProtKB-SubCell"/>
</dbReference>
<dbReference type="GO" id="GO:0016324">
    <property type="term" value="C:apical plasma membrane"/>
    <property type="evidence" value="ECO:0007669"/>
    <property type="project" value="UniProtKB-SubCell"/>
</dbReference>
<dbReference type="GO" id="GO:0005737">
    <property type="term" value="C:cytoplasm"/>
    <property type="evidence" value="ECO:0007669"/>
    <property type="project" value="UniProtKB-KW"/>
</dbReference>
<dbReference type="GO" id="GO:0030056">
    <property type="term" value="C:hemidesmosome"/>
    <property type="evidence" value="ECO:0007669"/>
    <property type="project" value="UniProtKB-SubCell"/>
</dbReference>
<dbReference type="GO" id="GO:0005874">
    <property type="term" value="C:microtubule"/>
    <property type="evidence" value="ECO:0000314"/>
    <property type="project" value="WormBase"/>
</dbReference>
<dbReference type="GO" id="GO:0031122">
    <property type="term" value="P:cytoplasmic microtubule organization"/>
    <property type="evidence" value="ECO:0000316"/>
    <property type="project" value="WormBase"/>
</dbReference>
<dbReference type="GO" id="GO:0007281">
    <property type="term" value="P:germ cell development"/>
    <property type="evidence" value="ECO:0000315"/>
    <property type="project" value="WormBase"/>
</dbReference>
<dbReference type="GO" id="GO:0002119">
    <property type="term" value="P:nematode larval development"/>
    <property type="evidence" value="ECO:0000316"/>
    <property type="project" value="WormBase"/>
</dbReference>
<accession>G5EEK3</accession>
<accession>A0A0M3UPV7</accession>
<accession>G5EBN2</accession>
<accession>G5EBP7</accession>
<accession>G5EC74</accession>
<accession>G5EE58</accession>
<accession>N1NSE8</accession>
<accession>Q8I4G1</accession>
<accession>Q9XVL5</accession>
<reference evidence="5" key="1">
    <citation type="journal article" date="2015" name="Elife">
        <title>NOCA-1 Functions with gamma-tubulin and in parallel to Patronin to assemble non-centrosomal microtubule arrays in C. elegans.</title>
        <authorList>
            <person name="Wang S."/>
            <person name="Wu D."/>
            <person name="Quintin S."/>
            <person name="Green R.A."/>
            <person name="Cheerambathur D.K."/>
            <person name="Ochoa S.D."/>
            <person name="Desai A."/>
            <person name="Oegema K."/>
        </authorList>
    </citation>
    <scope>NUCLEOTIDE SEQUENCE [MRNA] (ISOFORM H)</scope>
    <scope>FUNCTION</scope>
    <scope>SUBCELLULAR LOCATION</scope>
    <scope>DEVELOPMENTAL STAGE</scope>
    <scope>DISRUPTION PHENOTYPE</scope>
</reference>
<reference evidence="6" key="2">
    <citation type="journal article" date="1998" name="Science">
        <title>Genome sequence of the nematode C. elegans: a platform for investigating biology.</title>
        <authorList>
            <consortium name="The C. elegans sequencing consortium"/>
        </authorList>
    </citation>
    <scope>NUCLEOTIDE SEQUENCE [LARGE SCALE GENOMIC DNA]</scope>
    <source>
        <strain evidence="6">Bristol N2</strain>
    </source>
</reference>
<reference evidence="5" key="3">
    <citation type="journal article" date="2016" name="Development">
        <title>Non-centrosomal epidermal microtubules act in parallel to LET-502/ROCK to promote C. elegans elongation.</title>
        <authorList>
            <person name="Quintin S."/>
            <person name="Wang S."/>
            <person name="Pontabry J."/>
            <person name="Bender A."/>
            <person name="Robin F."/>
            <person name="Hyenne V."/>
            <person name="Landmann F."/>
            <person name="Gally C."/>
            <person name="Oegema K."/>
            <person name="Labouesse M."/>
        </authorList>
    </citation>
    <scope>FUNCTION</scope>
    <scope>SUBCELLULAR LOCATION</scope>
    <scope>DEVELOPMENTAL STAGE</scope>
    <scope>DISRUPTION PHENOTYPE</scope>
</reference>
<organism evidence="6">
    <name type="scientific">Caenorhabditis elegans</name>
    <dbReference type="NCBI Taxonomy" id="6239"/>
    <lineage>
        <taxon>Eukaryota</taxon>
        <taxon>Metazoa</taxon>
        <taxon>Ecdysozoa</taxon>
        <taxon>Nematoda</taxon>
        <taxon>Chromadorea</taxon>
        <taxon>Rhabditida</taxon>
        <taxon>Rhabditina</taxon>
        <taxon>Rhabditomorpha</taxon>
        <taxon>Rhabditoidea</taxon>
        <taxon>Rhabditidae</taxon>
        <taxon>Peloderinae</taxon>
        <taxon>Caenorhabditis</taxon>
    </lineage>
</organism>
<gene>
    <name evidence="9" type="primary">noca-1</name>
    <name evidence="9" type="ORF">T09E8.1</name>
</gene>
<feature type="chain" id="PRO_0000436174" description="Non-centrosomal microtubule array protein 1" evidence="5">
    <location>
        <begin position="1"/>
        <end position="922"/>
    </location>
</feature>
<feature type="region of interest" description="Disordered" evidence="2">
    <location>
        <begin position="1"/>
        <end position="134"/>
    </location>
</feature>
<feature type="region of interest" description="Disordered" evidence="2">
    <location>
        <begin position="250"/>
        <end position="277"/>
    </location>
</feature>
<feature type="region of interest" description="Disordered" evidence="2">
    <location>
        <begin position="465"/>
        <end position="491"/>
    </location>
</feature>
<feature type="region of interest" description="Disordered" evidence="2">
    <location>
        <begin position="533"/>
        <end position="563"/>
    </location>
</feature>
<feature type="coiled-coil region" evidence="1">
    <location>
        <begin position="564"/>
        <end position="728"/>
    </location>
</feature>
<feature type="compositionally biased region" description="Polar residues" evidence="2">
    <location>
        <begin position="1"/>
        <end position="10"/>
    </location>
</feature>
<feature type="compositionally biased region" description="Basic and acidic residues" evidence="2">
    <location>
        <begin position="43"/>
        <end position="54"/>
    </location>
</feature>
<feature type="compositionally biased region" description="Basic and acidic residues" evidence="2">
    <location>
        <begin position="70"/>
        <end position="94"/>
    </location>
</feature>
<feature type="compositionally biased region" description="Low complexity" evidence="2">
    <location>
        <begin position="99"/>
        <end position="113"/>
    </location>
</feature>
<feature type="compositionally biased region" description="Basic and acidic residues" evidence="2">
    <location>
        <begin position="256"/>
        <end position="276"/>
    </location>
</feature>
<feature type="compositionally biased region" description="Basic and acidic residues" evidence="2">
    <location>
        <begin position="468"/>
        <end position="484"/>
    </location>
</feature>
<feature type="compositionally biased region" description="Low complexity" evidence="2">
    <location>
        <begin position="539"/>
        <end position="563"/>
    </location>
</feature>
<feature type="splice variant" id="VSP_058274" description="In isoform d." evidence="5">
    <original>MSNERVSTGSLGERLMLRTRSTRGSVRETLSKAIRSTLGRASSMERKDMPDRPKYGTALTAMTSTTPPSPKDRSSDSGDGDSPRPRKFSSKECARIYFSNTSSEHSSRSNSSTPRRVRHTTASSGYGSLSHLPPISYRKSSDPLNSLMSQSMYVQSPGMHIDEPKCTSLSQRRLYYEDSSETYIPSSPSLTTLKDFMMTNDDETFDDFDFDNDDVKSVISSASTSRIFSVDNRMSKYQKNQSLRQFLNSPVRLRKRGDTSRRDAVEAGFEPRDTVPRCHSTQSLRDVQRVRSYNNSQFQASDLSLNPNGSIRAACDSTSGSVAPTAVVNPARNHVISHRQQHHTSYEKDLIPHHNIDVDRRRSLQALNGSSALYQLNNGGSPNGVRSQFSPSDLSIHTPVHHVGSRVRVSSVNQICDSNSAPQFSIDQRRSVHNIGNPVRNSFVDGIKTTSTPKNQ</original>
    <variation>MNICCCGGAMGRFYTKMIERLTGGGSPTSDQNGNSHHHHHHLPPAPRHLSSSHHQIETISGSSKLRAQSGSPALNRKKRPE</variation>
    <location>
        <begin position="1"/>
        <end position="456"/>
    </location>
</feature>
<feature type="splice variant" id="VSP_058275" description="In isoform e." evidence="5">
    <original>MSNERVSTGSLGERLMLRTRSTRGSVRETLSKAIRSTLGRASSMERKDMPDRPKYGTALTAMTSTTPPSPKDRSSDSGDGDSPRPRKFSSKECARIYFSNTSSEHSSRSNSSTPRRVRHTTASSGYGSLSHLPPISYRKSSDPLNSLMSQSMYVQSPGMHIDEPKCTSLSQRRLYYEDSSETYIPSSPSLTTLKDFMMTNDDETFDDFDFDNDDVKSVISSASTSRIFSVDNRMSKYQKNQSLRQFLNSPVRLRKRGDTSRRDAVEAGFEPRDTVPRCHSTQSLRDVQRVRSYNNSQFQASDLSLNPNGSIRAACDSTSGSVAPTAVVNPARNHVISHRQQHHTSYEKDLIPHHNIDVDRRRSLQALNGSSALYQLNNGGSPNGVRSQFSPSDLSIHTPVHHVGSRVRVSSVNQICDSNSAPQFSID</original>
    <variation>MSLVSGKTESSARWSIRPSCSCNDSLFTISDTECSEIEADMRRKDRHNWKKS</variation>
    <location>
        <begin position="1"/>
        <end position="427"/>
    </location>
</feature>
<feature type="splice variant" id="VSP_058276" description="In isoform g." evidence="5">
    <original>MSNERVSTGSLGERLMLRTRSTRGSVRETLSKAIRSTLGRASSMERKDMPDRPKYGTALTAMTSTTPPSPKDRSSDSGDGDSPRPRKFSSKECARIYFSNTSSEHSSRSNSSTPRRVRHTTASSGYGSLSHLPPISYRKSSDPLNSLMSQSMYVQSPGMHIDEPKCTSLSQRRLYYEDSSETYIPSSPSLTTLKDFMMTNDDETFDDFDFDNDDVKSVISSASTSRIFSVDNRMSKYQKNQSLRQFLNSPVRLRKRGDTSRRDAVEAGFEPRDTVPRCHSTQSLRDVQRVRSYNNSQFQASDLSLNPNGSIRAACDSTSGSVAPTAVVNPARNHVISHRQQHHTSYEKDLIPHHNIDVDRRRSLQALNGS</original>
    <variation>MQSIREPRSVELRESNKFMRSISHGRASTWRRNRIRPDNQLSA</variation>
    <location>
        <begin position="1"/>
        <end position="370"/>
    </location>
</feature>
<feature type="splice variant" id="VSP_058277" description="In isoform i." evidence="5">
    <original>MSNERVSTGSLGERLMLRTRSTRGSVRETLSKAIRSTLGRASSMERKDMPDRPKYGTALTAMTSTTPPSPKDRSSDSGDGDSPRPRKFSSKECARIYFSNTSSEHSSRSNSSTPRRVRHTTASSGYGSLSHLPPISYRKSSDPLNSLMSQSMYVQSPGMHIDEPKCTSLSQRRLYYEDSSETYIPSSPSLTTLKDFMMTNDDETFDDFDFDNDDVKSVISSASTSRIFSVDNRMSKYQKNQSLRQFLNSPVRLRKRGDTSRRDA</original>
    <variation>MLKQLLALTCMHKKDKNKLAITAGTAECSNRSPQNSPGSSSEGAADESLNQSVAIPEEAHLNTSQFISLPLSDVSFEAAASQNRATPIDFGTREVKEDDDVLSDTGRRRSVNLITPSPIPEETEDNLTETPIPVVEHIPRSAIFEPFNHENSPLFSVKARKKAHEYRSNDSTLSPSSSSNNDDSIRIDSIRVRSSKSATNNQLKGRLTPILGGSLRPIPKKRNRVAFNGNSTFVAPERLCLEVDKIHQDRCRFSFVLTLCVPYA</variation>
    <location>
        <begin position="1"/>
        <end position="264"/>
    </location>
</feature>
<feature type="splice variant" id="VSP_058278" description="In isoform a." evidence="5">
    <original>MSNERVSTGSLGERLMLRTRSTRGSVRETLSKAIRSTLGRASSMERKDMPDRPKYGTALTAMTSTTPPSPKDRSSDSGDGDSPRPRKFSSKECARIYFSNTSSEHSSRSNSSTPRRVRHTTASSGYGSLSHLPPISYRKSSDPLNSLMSQSMYVQSPGMHIDEPKCTSLSQRRLYYEDSSETYIPSSPSLTTLKDFMMTNDDETFDDFDFDNDDVKSVISSASTSRIFSVDNRMSKYQKNQSLRQFLNSPV</original>
    <variation>MCLVCAGCKVLSTLRAYCTGFMPNITVIIAPKKVLTSNSSSSTSDISMHRSIPEIYVPNDKYNEEKPIRRKSHGNI</variation>
    <location>
        <begin position="1"/>
        <end position="251"/>
    </location>
</feature>
<feature type="splice variant" id="VSP_058279" description="In isoform b." evidence="5">
    <original>MSNERVSTGSLGERLMLRTRSTRGSVRETLSKAIRSTLGRASSMERKDMPDRPKYGTALTAMTSTTPPSPKDRSSDSGDGDSPRPRKFSSKECARIYFSNTSSEHSSRSNSSTPRRVRHTTASSGYGSLSHLPPISYRKSSDPLNSLMSQSMYVQSPGMHIDEPKCTSLSQRRLYYEDSSETYIPSSPSLTTLKDFMMTNDDETFDDFDFDNDDVKSVISSASTSRIFSVDNRMSKYQKNQSLRQFLNSP</original>
    <variation>MASLCNSIIGWIKNDKE</variation>
    <location>
        <begin position="1"/>
        <end position="250"/>
    </location>
</feature>
<feature type="splice variant" id="VSP_058280" description="In isoform f." evidence="5">
    <original>MSNERVSTGSLGERLMLRTRSTRGSVRETLSKAIRSTLGRASSMERKDMPDRPKYGTALTAMTSTTPPSPKDRSSDSGDGDSPRPRKFSSKECARIYFSNTSSEHSSRSNSSTPRRVRHTTASSGYGSLSHLPPISYRKSSDPLNSLMSQSMYVQSPGMHIDEPKCTSLSQRRLYYEDSSETYIPSSPSLTTLKDFMMTNDDETFDDFDFDNDDVKSVISSASTSRIFSVDNRMSKYQKNQSLRQFLNSP</original>
    <variation>MLQPPSPRLGKRNIIKNVT</variation>
    <location>
        <begin position="1"/>
        <end position="250"/>
    </location>
</feature>
<feature type="splice variant" id="VSP_058281" description="In isoform h." evidence="5">
    <original>SNERVSTGSLGERLMLRTRSTRGSVRETLSKAIRSTLGRASSMERKDMPDRPKYGTALTAMTSTTPPSPKDRSSDSGDGDSPRPRKFSSKECARIYFSNTSSEHSSRSNSSTPRRVRHTTASSGYGSLSHLPPISYRKSSDPLNSLMSQSMYVQSPGMHIDEPKCTSLSQRRLYYEDSSETYIPSSPSLTTLKDFMMTNDDETFDDFDFDNDDVKSVISSASTSRIFSVDNRMSKYQKNQSLRQFLNSPV</original>
    <variation>LKQLLALTCMHKKDKNKLAITAGTAECSNRSPQNSPGSSSEGAADESLNQSVAIPEEAHLNTSQFISLPLSDVSFEAAASQNRATPIDFGTREVKEDDDVLSDTGRRRSVNLITPSPIPEETEDNLTETPIPVVEHIPRSAIFEPFNHENSPLFSVKARKKAHEYRSNDSTLSPSSSSNNDDSIRIDSIRVRSSKSATNNQLKGRLTPILGGSLRPIPKKRNRVAFNGNSTFVAPERLCLEVDKIHQDRF</variation>
    <location>
        <begin position="2"/>
        <end position="251"/>
    </location>
</feature>
<feature type="splice variant" id="VSP_058282" description="In isoform i." evidence="5">
    <location>
        <begin position="265"/>
        <end position="922"/>
    </location>
</feature>
<keyword id="KW-0025">Alternative splicing</keyword>
<keyword id="KW-0965">Cell junction</keyword>
<keyword id="KW-1003">Cell membrane</keyword>
<keyword id="KW-0175">Coiled coil</keyword>
<keyword id="KW-0963">Cytoplasm</keyword>
<keyword id="KW-0206">Cytoskeleton</keyword>
<keyword id="KW-0472">Membrane</keyword>
<keyword id="KW-1185">Reference proteome</keyword>
<protein>
    <recommendedName>
        <fullName evidence="9">Non-centrosomal microtubule array protein 1</fullName>
    </recommendedName>
</protein>